<proteinExistence type="inferred from homology"/>
<gene>
    <name evidence="1" type="primary">rplD</name>
    <name type="ordered locus">ECIAI39_3813</name>
</gene>
<keyword id="KW-0687">Ribonucleoprotein</keyword>
<keyword id="KW-0689">Ribosomal protein</keyword>
<keyword id="KW-0694">RNA-binding</keyword>
<keyword id="KW-0699">rRNA-binding</keyword>
<reference key="1">
    <citation type="journal article" date="2009" name="PLoS Genet.">
        <title>Organised genome dynamics in the Escherichia coli species results in highly diverse adaptive paths.</title>
        <authorList>
            <person name="Touchon M."/>
            <person name="Hoede C."/>
            <person name="Tenaillon O."/>
            <person name="Barbe V."/>
            <person name="Baeriswyl S."/>
            <person name="Bidet P."/>
            <person name="Bingen E."/>
            <person name="Bonacorsi S."/>
            <person name="Bouchier C."/>
            <person name="Bouvet O."/>
            <person name="Calteau A."/>
            <person name="Chiapello H."/>
            <person name="Clermont O."/>
            <person name="Cruveiller S."/>
            <person name="Danchin A."/>
            <person name="Diard M."/>
            <person name="Dossat C."/>
            <person name="Karoui M.E."/>
            <person name="Frapy E."/>
            <person name="Garry L."/>
            <person name="Ghigo J.M."/>
            <person name="Gilles A.M."/>
            <person name="Johnson J."/>
            <person name="Le Bouguenec C."/>
            <person name="Lescat M."/>
            <person name="Mangenot S."/>
            <person name="Martinez-Jehanne V."/>
            <person name="Matic I."/>
            <person name="Nassif X."/>
            <person name="Oztas S."/>
            <person name="Petit M.A."/>
            <person name="Pichon C."/>
            <person name="Rouy Z."/>
            <person name="Ruf C.S."/>
            <person name="Schneider D."/>
            <person name="Tourret J."/>
            <person name="Vacherie B."/>
            <person name="Vallenet D."/>
            <person name="Medigue C."/>
            <person name="Rocha E.P.C."/>
            <person name="Denamur E."/>
        </authorList>
    </citation>
    <scope>NUCLEOTIDE SEQUENCE [LARGE SCALE GENOMIC DNA]</scope>
    <source>
        <strain>IAI39 / ExPEC</strain>
    </source>
</reference>
<accession>B7NLN8</accession>
<feature type="chain" id="PRO_1000142119" description="Large ribosomal subunit protein uL4">
    <location>
        <begin position="1"/>
        <end position="201"/>
    </location>
</feature>
<feature type="region of interest" description="Disordered" evidence="2">
    <location>
        <begin position="44"/>
        <end position="71"/>
    </location>
</feature>
<sequence length="201" mass="22087">MELVLKDAQSALTVSETTFGRDFNEALVHQVVVAYAAGARQGTRAQKTRAEVTGSGKKPWRQKGTGRARSGSIKSPIWRSGGVTFAARPQDHSQKVNKKMYRGALKSILSELVRQDRLIVVEKFSVEAPKTKLLAQKLKDMALEDVLIITGELDENLFLAARNLHKVDVRDATGIDPVSLIAFDKVVMTADAVKQVEEMLA</sequence>
<name>RL4_ECO7I</name>
<dbReference type="EMBL" id="CU928164">
    <property type="protein sequence ID" value="CAR19927.1"/>
    <property type="molecule type" value="Genomic_DNA"/>
</dbReference>
<dbReference type="RefSeq" id="WP_000424395.1">
    <property type="nucleotide sequence ID" value="NC_011750.1"/>
</dbReference>
<dbReference type="RefSeq" id="YP_002409710.1">
    <property type="nucleotide sequence ID" value="NC_011750.1"/>
</dbReference>
<dbReference type="SMR" id="B7NLN8"/>
<dbReference type="STRING" id="585057.ECIAI39_3813"/>
<dbReference type="GeneID" id="97442859"/>
<dbReference type="KEGG" id="ect:ECIAI39_3813"/>
<dbReference type="PATRIC" id="fig|585057.6.peg.3950"/>
<dbReference type="HOGENOM" id="CLU_041575_5_2_6"/>
<dbReference type="PRO" id="PR:B7NLN8"/>
<dbReference type="Proteomes" id="UP000000749">
    <property type="component" value="Chromosome"/>
</dbReference>
<dbReference type="GO" id="GO:1990904">
    <property type="term" value="C:ribonucleoprotein complex"/>
    <property type="evidence" value="ECO:0007669"/>
    <property type="project" value="UniProtKB-KW"/>
</dbReference>
<dbReference type="GO" id="GO:0005840">
    <property type="term" value="C:ribosome"/>
    <property type="evidence" value="ECO:0007669"/>
    <property type="project" value="UniProtKB-KW"/>
</dbReference>
<dbReference type="GO" id="GO:0019843">
    <property type="term" value="F:rRNA binding"/>
    <property type="evidence" value="ECO:0007669"/>
    <property type="project" value="UniProtKB-UniRule"/>
</dbReference>
<dbReference type="GO" id="GO:0003735">
    <property type="term" value="F:structural constituent of ribosome"/>
    <property type="evidence" value="ECO:0007669"/>
    <property type="project" value="InterPro"/>
</dbReference>
<dbReference type="GO" id="GO:0006412">
    <property type="term" value="P:translation"/>
    <property type="evidence" value="ECO:0007669"/>
    <property type="project" value="UniProtKB-UniRule"/>
</dbReference>
<dbReference type="FunFam" id="3.40.1370.10:FF:000001">
    <property type="entry name" value="50S ribosomal protein L4"/>
    <property type="match status" value="1"/>
</dbReference>
<dbReference type="Gene3D" id="3.40.1370.10">
    <property type="match status" value="1"/>
</dbReference>
<dbReference type="HAMAP" id="MF_01328_B">
    <property type="entry name" value="Ribosomal_uL4_B"/>
    <property type="match status" value="1"/>
</dbReference>
<dbReference type="InterPro" id="IPR002136">
    <property type="entry name" value="Ribosomal_uL4"/>
</dbReference>
<dbReference type="InterPro" id="IPR013005">
    <property type="entry name" value="Ribosomal_uL4-like"/>
</dbReference>
<dbReference type="InterPro" id="IPR023574">
    <property type="entry name" value="Ribosomal_uL4_dom_sf"/>
</dbReference>
<dbReference type="NCBIfam" id="TIGR03953">
    <property type="entry name" value="rplD_bact"/>
    <property type="match status" value="1"/>
</dbReference>
<dbReference type="PANTHER" id="PTHR10746">
    <property type="entry name" value="50S RIBOSOMAL PROTEIN L4"/>
    <property type="match status" value="1"/>
</dbReference>
<dbReference type="PANTHER" id="PTHR10746:SF6">
    <property type="entry name" value="LARGE RIBOSOMAL SUBUNIT PROTEIN UL4M"/>
    <property type="match status" value="1"/>
</dbReference>
<dbReference type="Pfam" id="PF00573">
    <property type="entry name" value="Ribosomal_L4"/>
    <property type="match status" value="1"/>
</dbReference>
<dbReference type="SUPFAM" id="SSF52166">
    <property type="entry name" value="Ribosomal protein L4"/>
    <property type="match status" value="1"/>
</dbReference>
<evidence type="ECO:0000255" key="1">
    <source>
        <dbReference type="HAMAP-Rule" id="MF_01328"/>
    </source>
</evidence>
<evidence type="ECO:0000256" key="2">
    <source>
        <dbReference type="SAM" id="MobiDB-lite"/>
    </source>
</evidence>
<evidence type="ECO:0000305" key="3"/>
<comment type="function">
    <text evidence="1">One of the primary rRNA binding proteins, this protein initially binds near the 5'-end of the 23S rRNA. It is important during the early stages of 50S assembly. It makes multiple contacts with different domains of the 23S rRNA in the assembled 50S subunit and ribosome.</text>
</comment>
<comment type="function">
    <text evidence="1">Forms part of the polypeptide exit tunnel.</text>
</comment>
<comment type="subunit">
    <text evidence="1">Part of the 50S ribosomal subunit.</text>
</comment>
<comment type="similarity">
    <text evidence="1">Belongs to the universal ribosomal protein uL4 family.</text>
</comment>
<organism>
    <name type="scientific">Escherichia coli O7:K1 (strain IAI39 / ExPEC)</name>
    <dbReference type="NCBI Taxonomy" id="585057"/>
    <lineage>
        <taxon>Bacteria</taxon>
        <taxon>Pseudomonadati</taxon>
        <taxon>Pseudomonadota</taxon>
        <taxon>Gammaproteobacteria</taxon>
        <taxon>Enterobacterales</taxon>
        <taxon>Enterobacteriaceae</taxon>
        <taxon>Escherichia</taxon>
    </lineage>
</organism>
<protein>
    <recommendedName>
        <fullName evidence="1">Large ribosomal subunit protein uL4</fullName>
    </recommendedName>
    <alternativeName>
        <fullName evidence="3">50S ribosomal protein L4</fullName>
    </alternativeName>
</protein>